<reference key="1">
    <citation type="journal article" date="2003" name="Nature">
        <title>The genome of a motile marine Synechococcus.</title>
        <authorList>
            <person name="Palenik B."/>
            <person name="Brahamsha B."/>
            <person name="Larimer F.W."/>
            <person name="Land M.L."/>
            <person name="Hauser L."/>
            <person name="Chain P."/>
            <person name="Lamerdin J.E."/>
            <person name="Regala W."/>
            <person name="Allen E.E."/>
            <person name="McCarren J."/>
            <person name="Paulsen I.T."/>
            <person name="Dufresne A."/>
            <person name="Partensky F."/>
            <person name="Webb E.A."/>
            <person name="Waterbury J."/>
        </authorList>
    </citation>
    <scope>NUCLEOTIDE SEQUENCE [LARGE SCALE GENOMIC DNA]</scope>
    <source>
        <strain>WH8102</strain>
    </source>
</reference>
<organism>
    <name type="scientific">Parasynechococcus marenigrum (strain WH8102)</name>
    <dbReference type="NCBI Taxonomy" id="84588"/>
    <lineage>
        <taxon>Bacteria</taxon>
        <taxon>Bacillati</taxon>
        <taxon>Cyanobacteriota</taxon>
        <taxon>Cyanophyceae</taxon>
        <taxon>Synechococcales</taxon>
        <taxon>Prochlorococcaceae</taxon>
        <taxon>Parasynechococcus</taxon>
        <taxon>Parasynechococcus marenigrum</taxon>
    </lineage>
</organism>
<keyword id="KW-0067">ATP-binding</keyword>
<keyword id="KW-0963">Cytoplasm</keyword>
<keyword id="KW-0418">Kinase</keyword>
<keyword id="KW-0545">Nucleotide biosynthesis</keyword>
<keyword id="KW-0547">Nucleotide-binding</keyword>
<keyword id="KW-0808">Transferase</keyword>
<feature type="chain" id="PRO_0000158870" description="Adenylate kinase">
    <location>
        <begin position="1"/>
        <end position="183"/>
    </location>
</feature>
<feature type="region of interest" description="NMP" evidence="1">
    <location>
        <begin position="32"/>
        <end position="61"/>
    </location>
</feature>
<feature type="region of interest" description="LID" evidence="1">
    <location>
        <begin position="127"/>
        <end position="133"/>
    </location>
</feature>
<feature type="binding site" evidence="1">
    <location>
        <begin position="12"/>
        <end position="17"/>
    </location>
    <ligand>
        <name>ATP</name>
        <dbReference type="ChEBI" id="CHEBI:30616"/>
    </ligand>
</feature>
<feature type="binding site" evidence="1">
    <location>
        <position position="33"/>
    </location>
    <ligand>
        <name>AMP</name>
        <dbReference type="ChEBI" id="CHEBI:456215"/>
    </ligand>
</feature>
<feature type="binding site" evidence="1">
    <location>
        <position position="38"/>
    </location>
    <ligand>
        <name>AMP</name>
        <dbReference type="ChEBI" id="CHEBI:456215"/>
    </ligand>
</feature>
<feature type="binding site" evidence="1">
    <location>
        <begin position="59"/>
        <end position="61"/>
    </location>
    <ligand>
        <name>AMP</name>
        <dbReference type="ChEBI" id="CHEBI:456215"/>
    </ligand>
</feature>
<feature type="binding site" evidence="1">
    <location>
        <begin position="86"/>
        <end position="89"/>
    </location>
    <ligand>
        <name>AMP</name>
        <dbReference type="ChEBI" id="CHEBI:456215"/>
    </ligand>
</feature>
<feature type="binding site" evidence="1">
    <location>
        <position position="93"/>
    </location>
    <ligand>
        <name>AMP</name>
        <dbReference type="ChEBI" id="CHEBI:456215"/>
    </ligand>
</feature>
<feature type="binding site" evidence="1">
    <location>
        <position position="128"/>
    </location>
    <ligand>
        <name>ATP</name>
        <dbReference type="ChEBI" id="CHEBI:30616"/>
    </ligand>
</feature>
<feature type="binding site" evidence="1">
    <location>
        <position position="130"/>
    </location>
    <ligand>
        <name>AMP</name>
        <dbReference type="ChEBI" id="CHEBI:456215"/>
    </ligand>
</feature>
<feature type="binding site" evidence="1">
    <location>
        <position position="141"/>
    </location>
    <ligand>
        <name>AMP</name>
        <dbReference type="ChEBI" id="CHEBI:456215"/>
    </ligand>
</feature>
<feature type="binding site" evidence="1">
    <location>
        <position position="169"/>
    </location>
    <ligand>
        <name>ATP</name>
        <dbReference type="ChEBI" id="CHEBI:30616"/>
    </ligand>
</feature>
<sequence>MKSRLLFLGPPGAGKGTQAARLCNANGMSHLSTGDLLRSEVAAGTALGQEAEAVMNRGELVSDALVLAIVESQLKGLSSGGWLLDGFPRTVPQADALEPLLDELKQPIEAVVLLELDDAVLIERLLARGRDDDNEAVIRNRLEVYREKTSPLISFYRDKGLLVSVEANGSVEEITQRITKVLS</sequence>
<dbReference type="EC" id="2.7.4.3" evidence="1"/>
<dbReference type="EMBL" id="BX569694">
    <property type="protein sequence ID" value="CAE08601.1"/>
    <property type="molecule type" value="Genomic_DNA"/>
</dbReference>
<dbReference type="RefSeq" id="WP_011128944.1">
    <property type="nucleotide sequence ID" value="NC_005070.1"/>
</dbReference>
<dbReference type="SMR" id="Q7U4I1"/>
<dbReference type="STRING" id="84588.SYNW2086"/>
<dbReference type="KEGG" id="syw:SYNW2086"/>
<dbReference type="eggNOG" id="COG0563">
    <property type="taxonomic scope" value="Bacteria"/>
</dbReference>
<dbReference type="HOGENOM" id="CLU_032354_4_1_3"/>
<dbReference type="UniPathway" id="UPA00588">
    <property type="reaction ID" value="UER00649"/>
</dbReference>
<dbReference type="Proteomes" id="UP000001422">
    <property type="component" value="Chromosome"/>
</dbReference>
<dbReference type="GO" id="GO:0005737">
    <property type="term" value="C:cytoplasm"/>
    <property type="evidence" value="ECO:0007669"/>
    <property type="project" value="UniProtKB-SubCell"/>
</dbReference>
<dbReference type="GO" id="GO:0004017">
    <property type="term" value="F:adenylate kinase activity"/>
    <property type="evidence" value="ECO:0007669"/>
    <property type="project" value="UniProtKB-UniRule"/>
</dbReference>
<dbReference type="GO" id="GO:0005524">
    <property type="term" value="F:ATP binding"/>
    <property type="evidence" value="ECO:0007669"/>
    <property type="project" value="UniProtKB-UniRule"/>
</dbReference>
<dbReference type="GO" id="GO:0044209">
    <property type="term" value="P:AMP salvage"/>
    <property type="evidence" value="ECO:0007669"/>
    <property type="project" value="UniProtKB-UniRule"/>
</dbReference>
<dbReference type="CDD" id="cd01428">
    <property type="entry name" value="ADK"/>
    <property type="match status" value="1"/>
</dbReference>
<dbReference type="Gene3D" id="3.40.50.300">
    <property type="entry name" value="P-loop containing nucleotide triphosphate hydrolases"/>
    <property type="match status" value="1"/>
</dbReference>
<dbReference type="HAMAP" id="MF_00235">
    <property type="entry name" value="Adenylate_kinase_Adk"/>
    <property type="match status" value="1"/>
</dbReference>
<dbReference type="InterPro" id="IPR000850">
    <property type="entry name" value="Adenylat/UMP-CMP_kin"/>
</dbReference>
<dbReference type="InterPro" id="IPR033690">
    <property type="entry name" value="Adenylat_kinase_CS"/>
</dbReference>
<dbReference type="InterPro" id="IPR027417">
    <property type="entry name" value="P-loop_NTPase"/>
</dbReference>
<dbReference type="NCBIfam" id="NF001381">
    <property type="entry name" value="PRK00279.1-3"/>
    <property type="match status" value="1"/>
</dbReference>
<dbReference type="NCBIfam" id="NF011100">
    <property type="entry name" value="PRK14527.1"/>
    <property type="match status" value="1"/>
</dbReference>
<dbReference type="NCBIfam" id="NF011104">
    <property type="entry name" value="PRK14531.1"/>
    <property type="match status" value="1"/>
</dbReference>
<dbReference type="NCBIfam" id="NF011105">
    <property type="entry name" value="PRK14532.1"/>
    <property type="match status" value="1"/>
</dbReference>
<dbReference type="PANTHER" id="PTHR23359">
    <property type="entry name" value="NUCLEOTIDE KINASE"/>
    <property type="match status" value="1"/>
</dbReference>
<dbReference type="Pfam" id="PF00406">
    <property type="entry name" value="ADK"/>
    <property type="match status" value="1"/>
</dbReference>
<dbReference type="PRINTS" id="PR00094">
    <property type="entry name" value="ADENYLTKNASE"/>
</dbReference>
<dbReference type="SUPFAM" id="SSF52540">
    <property type="entry name" value="P-loop containing nucleoside triphosphate hydrolases"/>
    <property type="match status" value="1"/>
</dbReference>
<dbReference type="PROSITE" id="PS00113">
    <property type="entry name" value="ADENYLATE_KINASE"/>
    <property type="match status" value="1"/>
</dbReference>
<evidence type="ECO:0000255" key="1">
    <source>
        <dbReference type="HAMAP-Rule" id="MF_00235"/>
    </source>
</evidence>
<name>KAD_PARMW</name>
<proteinExistence type="inferred from homology"/>
<gene>
    <name evidence="1" type="primary">adk</name>
    <name type="ordered locus">SYNW2086</name>
</gene>
<comment type="function">
    <text evidence="1">Catalyzes the reversible transfer of the terminal phosphate group between ATP and AMP. Plays an important role in cellular energy homeostasis and in adenine nucleotide metabolism.</text>
</comment>
<comment type="catalytic activity">
    <reaction evidence="1">
        <text>AMP + ATP = 2 ADP</text>
        <dbReference type="Rhea" id="RHEA:12973"/>
        <dbReference type="ChEBI" id="CHEBI:30616"/>
        <dbReference type="ChEBI" id="CHEBI:456215"/>
        <dbReference type="ChEBI" id="CHEBI:456216"/>
        <dbReference type="EC" id="2.7.4.3"/>
    </reaction>
</comment>
<comment type="pathway">
    <text evidence="1">Purine metabolism; AMP biosynthesis via salvage pathway; AMP from ADP: step 1/1.</text>
</comment>
<comment type="subunit">
    <text evidence="1">Monomer.</text>
</comment>
<comment type="subcellular location">
    <subcellularLocation>
        <location evidence="1">Cytoplasm</location>
    </subcellularLocation>
</comment>
<comment type="domain">
    <text evidence="1">Consists of three domains, a large central CORE domain and two small peripheral domains, NMPbind and LID, which undergo movements during catalysis. The LID domain closes over the site of phosphoryl transfer upon ATP binding. Assembling and dissambling the active center during each catalytic cycle provides an effective means to prevent ATP hydrolysis.</text>
</comment>
<comment type="similarity">
    <text evidence="1">Belongs to the adenylate kinase family.</text>
</comment>
<protein>
    <recommendedName>
        <fullName evidence="1">Adenylate kinase</fullName>
        <shortName evidence="1">AK</shortName>
        <ecNumber evidence="1">2.7.4.3</ecNumber>
    </recommendedName>
    <alternativeName>
        <fullName evidence="1">ATP-AMP transphosphorylase</fullName>
    </alternativeName>
    <alternativeName>
        <fullName evidence="1">ATP:AMP phosphotransferase</fullName>
    </alternativeName>
    <alternativeName>
        <fullName evidence="1">Adenylate monophosphate kinase</fullName>
    </alternativeName>
</protein>
<accession>Q7U4I1</accession>